<name>RS9_RHOCS</name>
<evidence type="ECO:0000255" key="1">
    <source>
        <dbReference type="HAMAP-Rule" id="MF_00532"/>
    </source>
</evidence>
<evidence type="ECO:0000256" key="2">
    <source>
        <dbReference type="SAM" id="MobiDB-lite"/>
    </source>
</evidence>
<evidence type="ECO:0000305" key="3"/>
<dbReference type="EMBL" id="CP000613">
    <property type="protein sequence ID" value="ACI98718.1"/>
    <property type="molecule type" value="Genomic_DNA"/>
</dbReference>
<dbReference type="RefSeq" id="WP_012566505.1">
    <property type="nucleotide sequence ID" value="NC_011420.2"/>
</dbReference>
<dbReference type="SMR" id="B6IMQ2"/>
<dbReference type="STRING" id="414684.RC1_1313"/>
<dbReference type="KEGG" id="rce:RC1_1313"/>
<dbReference type="eggNOG" id="COG0103">
    <property type="taxonomic scope" value="Bacteria"/>
</dbReference>
<dbReference type="HOGENOM" id="CLU_046483_2_0_5"/>
<dbReference type="OrthoDB" id="9803965at2"/>
<dbReference type="Proteomes" id="UP000001591">
    <property type="component" value="Chromosome"/>
</dbReference>
<dbReference type="GO" id="GO:0022627">
    <property type="term" value="C:cytosolic small ribosomal subunit"/>
    <property type="evidence" value="ECO:0007669"/>
    <property type="project" value="TreeGrafter"/>
</dbReference>
<dbReference type="GO" id="GO:0003723">
    <property type="term" value="F:RNA binding"/>
    <property type="evidence" value="ECO:0007669"/>
    <property type="project" value="TreeGrafter"/>
</dbReference>
<dbReference type="GO" id="GO:0003735">
    <property type="term" value="F:structural constituent of ribosome"/>
    <property type="evidence" value="ECO:0007669"/>
    <property type="project" value="InterPro"/>
</dbReference>
<dbReference type="GO" id="GO:0006412">
    <property type="term" value="P:translation"/>
    <property type="evidence" value="ECO:0007669"/>
    <property type="project" value="UniProtKB-UniRule"/>
</dbReference>
<dbReference type="FunFam" id="3.30.230.10:FF:000034">
    <property type="entry name" value="30S ribosomal protein S9"/>
    <property type="match status" value="1"/>
</dbReference>
<dbReference type="Gene3D" id="3.30.230.10">
    <property type="match status" value="1"/>
</dbReference>
<dbReference type="HAMAP" id="MF_00532_B">
    <property type="entry name" value="Ribosomal_uS9_B"/>
    <property type="match status" value="1"/>
</dbReference>
<dbReference type="InterPro" id="IPR020568">
    <property type="entry name" value="Ribosomal_Su5_D2-typ_SF"/>
</dbReference>
<dbReference type="InterPro" id="IPR000754">
    <property type="entry name" value="Ribosomal_uS9"/>
</dbReference>
<dbReference type="InterPro" id="IPR023035">
    <property type="entry name" value="Ribosomal_uS9_bac/plastid"/>
</dbReference>
<dbReference type="InterPro" id="IPR020574">
    <property type="entry name" value="Ribosomal_uS9_CS"/>
</dbReference>
<dbReference type="InterPro" id="IPR014721">
    <property type="entry name" value="Ribsml_uS5_D2-typ_fold_subgr"/>
</dbReference>
<dbReference type="NCBIfam" id="NF001099">
    <property type="entry name" value="PRK00132.1"/>
    <property type="match status" value="1"/>
</dbReference>
<dbReference type="PANTHER" id="PTHR21569">
    <property type="entry name" value="RIBOSOMAL PROTEIN S9"/>
    <property type="match status" value="1"/>
</dbReference>
<dbReference type="PANTHER" id="PTHR21569:SF1">
    <property type="entry name" value="SMALL RIBOSOMAL SUBUNIT PROTEIN US9M"/>
    <property type="match status" value="1"/>
</dbReference>
<dbReference type="Pfam" id="PF00380">
    <property type="entry name" value="Ribosomal_S9"/>
    <property type="match status" value="1"/>
</dbReference>
<dbReference type="SUPFAM" id="SSF54211">
    <property type="entry name" value="Ribosomal protein S5 domain 2-like"/>
    <property type="match status" value="1"/>
</dbReference>
<dbReference type="PROSITE" id="PS00360">
    <property type="entry name" value="RIBOSOMAL_S9"/>
    <property type="match status" value="1"/>
</dbReference>
<gene>
    <name evidence="1" type="primary">rpsI</name>
    <name type="ordered locus">RC1_1313</name>
</gene>
<organism>
    <name type="scientific">Rhodospirillum centenum (strain ATCC 51521 / SW)</name>
    <dbReference type="NCBI Taxonomy" id="414684"/>
    <lineage>
        <taxon>Bacteria</taxon>
        <taxon>Pseudomonadati</taxon>
        <taxon>Pseudomonadota</taxon>
        <taxon>Alphaproteobacteria</taxon>
        <taxon>Rhodospirillales</taxon>
        <taxon>Rhodospirillaceae</taxon>
        <taxon>Rhodospirillum</taxon>
    </lineage>
</organism>
<protein>
    <recommendedName>
        <fullName evidence="1">Small ribosomal subunit protein uS9</fullName>
    </recommendedName>
    <alternativeName>
        <fullName evidence="3">30S ribosomal protein S9</fullName>
    </alternativeName>
</protein>
<sequence>MAQTITSLADLKQGPGAEPAGLSAEPQEPKLDKEGRAYATGKRKDAVARVWIKPGSGKIIVNGRDLGVYFARPVLRMMINQPFSIVARVDQYDVMCTVSGGGLSGQAGALRHGISKALTYYEPALRPALKAAGLLTRDPRVVERKKYGRAKARRSFQFSKR</sequence>
<feature type="chain" id="PRO_1000128161" description="Small ribosomal subunit protein uS9">
    <location>
        <begin position="1"/>
        <end position="161"/>
    </location>
</feature>
<feature type="region of interest" description="Disordered" evidence="2">
    <location>
        <begin position="1"/>
        <end position="38"/>
    </location>
</feature>
<feature type="compositionally biased region" description="Basic and acidic residues" evidence="2">
    <location>
        <begin position="27"/>
        <end position="38"/>
    </location>
</feature>
<keyword id="KW-1185">Reference proteome</keyword>
<keyword id="KW-0687">Ribonucleoprotein</keyword>
<keyword id="KW-0689">Ribosomal protein</keyword>
<proteinExistence type="inferred from homology"/>
<comment type="similarity">
    <text evidence="1">Belongs to the universal ribosomal protein uS9 family.</text>
</comment>
<accession>B6IMQ2</accession>
<reference key="1">
    <citation type="submission" date="2007-03" db="EMBL/GenBank/DDBJ databases">
        <title>Genome sequence of Rhodospirillum centenum.</title>
        <authorList>
            <person name="Touchman J.W."/>
            <person name="Bauer C."/>
            <person name="Blankenship R.E."/>
        </authorList>
    </citation>
    <scope>NUCLEOTIDE SEQUENCE [LARGE SCALE GENOMIC DNA]</scope>
    <source>
        <strain>ATCC 51521 / SW</strain>
    </source>
</reference>